<gene>
    <name evidence="7" type="primary">BOLA1</name>
    <name evidence="10" type="ordered locus">At1g55805</name>
    <name evidence="11" type="ORF">F14J16</name>
</gene>
<sequence length="160" mass="17672">MFSSSIRLIVSGFHRTQPLKSPVNSPSVFISVPKFFNSESKSTGTGSRSVAMSSVEKTGSDSGAIENRASRMREKLQKELEPVELVIEDVSYQHAGHAGMKGRTDDETHFNVKIVSKGFEGMNLVKRHRLVYHLLREELDTGLHALSIVSKTPSESPSKD</sequence>
<reference key="1">
    <citation type="journal article" date="2000" name="Nature">
        <title>Sequence and analysis of chromosome 1 of the plant Arabidopsis thaliana.</title>
        <authorList>
            <person name="Theologis A."/>
            <person name="Ecker J.R."/>
            <person name="Palm C.J."/>
            <person name="Federspiel N.A."/>
            <person name="Kaul S."/>
            <person name="White O."/>
            <person name="Alonso J."/>
            <person name="Altafi H."/>
            <person name="Araujo R."/>
            <person name="Bowman C.L."/>
            <person name="Brooks S.Y."/>
            <person name="Buehler E."/>
            <person name="Chan A."/>
            <person name="Chao Q."/>
            <person name="Chen H."/>
            <person name="Cheuk R.F."/>
            <person name="Chin C.W."/>
            <person name="Chung M.K."/>
            <person name="Conn L."/>
            <person name="Conway A.B."/>
            <person name="Conway A.R."/>
            <person name="Creasy T.H."/>
            <person name="Dewar K."/>
            <person name="Dunn P."/>
            <person name="Etgu P."/>
            <person name="Feldblyum T.V."/>
            <person name="Feng J.-D."/>
            <person name="Fong B."/>
            <person name="Fujii C.Y."/>
            <person name="Gill J.E."/>
            <person name="Goldsmith A.D."/>
            <person name="Haas B."/>
            <person name="Hansen N.F."/>
            <person name="Hughes B."/>
            <person name="Huizar L."/>
            <person name="Hunter J.L."/>
            <person name="Jenkins J."/>
            <person name="Johnson-Hopson C."/>
            <person name="Khan S."/>
            <person name="Khaykin E."/>
            <person name="Kim C.J."/>
            <person name="Koo H.L."/>
            <person name="Kremenetskaia I."/>
            <person name="Kurtz D.B."/>
            <person name="Kwan A."/>
            <person name="Lam B."/>
            <person name="Langin-Hooper S."/>
            <person name="Lee A."/>
            <person name="Lee J.M."/>
            <person name="Lenz C.A."/>
            <person name="Li J.H."/>
            <person name="Li Y.-P."/>
            <person name="Lin X."/>
            <person name="Liu S.X."/>
            <person name="Liu Z.A."/>
            <person name="Luros J.S."/>
            <person name="Maiti R."/>
            <person name="Marziali A."/>
            <person name="Militscher J."/>
            <person name="Miranda M."/>
            <person name="Nguyen M."/>
            <person name="Nierman W.C."/>
            <person name="Osborne B.I."/>
            <person name="Pai G."/>
            <person name="Peterson J."/>
            <person name="Pham P.K."/>
            <person name="Rizzo M."/>
            <person name="Rooney T."/>
            <person name="Rowley D."/>
            <person name="Sakano H."/>
            <person name="Salzberg S.L."/>
            <person name="Schwartz J.R."/>
            <person name="Shinn P."/>
            <person name="Southwick A.M."/>
            <person name="Sun H."/>
            <person name="Tallon L.J."/>
            <person name="Tambunga G."/>
            <person name="Toriumi M.J."/>
            <person name="Town C.D."/>
            <person name="Utterback T."/>
            <person name="Van Aken S."/>
            <person name="Vaysberg M."/>
            <person name="Vysotskaia V.S."/>
            <person name="Walker M."/>
            <person name="Wu D."/>
            <person name="Yu G."/>
            <person name="Fraser C.M."/>
            <person name="Venter J.C."/>
            <person name="Davis R.W."/>
        </authorList>
    </citation>
    <scope>NUCLEOTIDE SEQUENCE [LARGE SCALE GENOMIC DNA]</scope>
    <source>
        <strain>cv. Columbia</strain>
    </source>
</reference>
<reference key="2">
    <citation type="journal article" date="2017" name="Plant J.">
        <title>Araport11: a complete reannotation of the Arabidopsis thaliana reference genome.</title>
        <authorList>
            <person name="Cheng C.Y."/>
            <person name="Krishnakumar V."/>
            <person name="Chan A.P."/>
            <person name="Thibaud-Nissen F."/>
            <person name="Schobel S."/>
            <person name="Town C.D."/>
        </authorList>
    </citation>
    <scope>GENOME REANNOTATION</scope>
    <source>
        <strain>cv. Columbia</strain>
    </source>
</reference>
<reference key="3">
    <citation type="submission" date="2004-09" db="EMBL/GenBank/DDBJ databases">
        <title>Large-scale analysis of RIKEN Arabidopsis full-length (RAFL) cDNAs.</title>
        <authorList>
            <person name="Totoki Y."/>
            <person name="Seki M."/>
            <person name="Ishida J."/>
            <person name="Nakajima M."/>
            <person name="Enju A."/>
            <person name="Kamiya A."/>
            <person name="Narusaka M."/>
            <person name="Shin-i T."/>
            <person name="Nakagawa M."/>
            <person name="Sakamoto N."/>
            <person name="Oishi K."/>
            <person name="Kohara Y."/>
            <person name="Kobayashi M."/>
            <person name="Toyoda A."/>
            <person name="Sakaki Y."/>
            <person name="Sakurai T."/>
            <person name="Iida K."/>
            <person name="Akiyama K."/>
            <person name="Satou M."/>
            <person name="Toyoda T."/>
            <person name="Konagaya A."/>
            <person name="Carninci P."/>
            <person name="Kawai J."/>
            <person name="Hayashizaki Y."/>
            <person name="Shinozaki K."/>
        </authorList>
    </citation>
    <scope>NUCLEOTIDE SEQUENCE [LARGE SCALE MRNA]</scope>
    <source>
        <strain>cv. Columbia</strain>
    </source>
</reference>
<reference key="4">
    <citation type="journal article" date="2003" name="Science">
        <title>Empirical analysis of transcriptional activity in the Arabidopsis genome.</title>
        <authorList>
            <person name="Yamada K."/>
            <person name="Lim J."/>
            <person name="Dale J.M."/>
            <person name="Chen H."/>
            <person name="Shinn P."/>
            <person name="Palm C.J."/>
            <person name="Southwick A.M."/>
            <person name="Wu H.C."/>
            <person name="Kim C.J."/>
            <person name="Nguyen M."/>
            <person name="Pham P.K."/>
            <person name="Cheuk R.F."/>
            <person name="Karlin-Newmann G."/>
            <person name="Liu S.X."/>
            <person name="Lam B."/>
            <person name="Sakano H."/>
            <person name="Wu T."/>
            <person name="Yu G."/>
            <person name="Miranda M."/>
            <person name="Quach H.L."/>
            <person name="Tripp M."/>
            <person name="Chang C.H."/>
            <person name="Lee J.M."/>
            <person name="Toriumi M.J."/>
            <person name="Chan M.M."/>
            <person name="Tang C.C."/>
            <person name="Onodera C.S."/>
            <person name="Deng J.M."/>
            <person name="Akiyama K."/>
            <person name="Ansari Y."/>
            <person name="Arakawa T."/>
            <person name="Banh J."/>
            <person name="Banno F."/>
            <person name="Bowser L."/>
            <person name="Brooks S.Y."/>
            <person name="Carninci P."/>
            <person name="Chao Q."/>
            <person name="Choy N."/>
            <person name="Enju A."/>
            <person name="Goldsmith A.D."/>
            <person name="Gurjal M."/>
            <person name="Hansen N.F."/>
            <person name="Hayashizaki Y."/>
            <person name="Johnson-Hopson C."/>
            <person name="Hsuan V.W."/>
            <person name="Iida K."/>
            <person name="Karnes M."/>
            <person name="Khan S."/>
            <person name="Koesema E."/>
            <person name="Ishida J."/>
            <person name="Jiang P.X."/>
            <person name="Jones T."/>
            <person name="Kawai J."/>
            <person name="Kamiya A."/>
            <person name="Meyers C."/>
            <person name="Nakajima M."/>
            <person name="Narusaka M."/>
            <person name="Seki M."/>
            <person name="Sakurai T."/>
            <person name="Satou M."/>
            <person name="Tamse R."/>
            <person name="Vaysberg M."/>
            <person name="Wallender E.K."/>
            <person name="Wong C."/>
            <person name="Yamamura Y."/>
            <person name="Yuan S."/>
            <person name="Shinozaki K."/>
            <person name="Davis R.W."/>
            <person name="Theologis A."/>
            <person name="Ecker J.R."/>
        </authorList>
    </citation>
    <scope>NUCLEOTIDE SEQUENCE [LARGE SCALE MRNA] OF 2-160</scope>
    <source>
        <strain>cv. Columbia</strain>
    </source>
</reference>
<reference key="5">
    <citation type="journal article" date="2014" name="Mol. Plant">
        <title>Monothiol glutaredoxin-BolA interactions: redox control of Arabidopsis thaliana BolA2 and SufE1.</title>
        <authorList>
            <person name="Couturier J."/>
            <person name="Wu H.C."/>
            <person name="Dhalleine T."/>
            <person name="Pegeot H."/>
            <person name="Sudre D."/>
            <person name="Gualberto J.M."/>
            <person name="Jacquot J.P."/>
            <person name="Gaymard F."/>
            <person name="Vignols F."/>
            <person name="Rouhier N."/>
        </authorList>
    </citation>
    <scope>SUBCELLULAR LOCATION</scope>
    <scope>INTERACTION WITH GRXC5; GRXS14; GRXS15; GRXS16 AND GRXS17</scope>
    <scope>GENE FAMILY</scope>
    <scope>NOMENCLATURE</scope>
</reference>
<reference key="6">
    <citation type="journal article" date="2014" name="Plant Signal. Behav.">
        <title>Putative roles of glutaredoxin-BolA holo-heterodimers in plants.</title>
        <authorList>
            <person name="Dhalleine T."/>
            <person name="Rouhier N."/>
            <person name="Couturier J."/>
        </authorList>
    </citation>
    <scope>FUNCTION</scope>
    <scope>INTERACTION WITH GRXS14 AND GRXS16</scope>
</reference>
<reference key="7">
    <citation type="journal article" date="2014" name="J. Biol. Chem.">
        <title>Structural and spectroscopic insights into BolA-glutaredoxin complexes.</title>
        <authorList>
            <person name="Roret T."/>
            <person name="Tsan P."/>
            <person name="Couturier J."/>
            <person name="Zhang B."/>
            <person name="Johnson M.K."/>
            <person name="Rouhier N."/>
            <person name="Didierjean C."/>
        </authorList>
    </citation>
    <scope>X-RAY CRYSTALLOGRAPHY (2.00 ANGSTROMS) OF 64-160</scope>
    <scope>INTERACTION WITH GRXS14</scope>
</reference>
<protein>
    <recommendedName>
        <fullName evidence="7">Protein BOLA1, chloroplastic</fullName>
    </recommendedName>
</protein>
<evidence type="ECO:0000255" key="1"/>
<evidence type="ECO:0000255" key="2">
    <source>
        <dbReference type="RuleBase" id="RU003860"/>
    </source>
</evidence>
<evidence type="ECO:0000256" key="3">
    <source>
        <dbReference type="SAM" id="MobiDB-lite"/>
    </source>
</evidence>
<evidence type="ECO:0000269" key="4">
    <source>
    </source>
</evidence>
<evidence type="ECO:0000269" key="5">
    <source>
    </source>
</evidence>
<evidence type="ECO:0000269" key="6">
    <source>
    </source>
</evidence>
<evidence type="ECO:0000303" key="7">
    <source>
    </source>
</evidence>
<evidence type="ECO:0000305" key="8"/>
<evidence type="ECO:0000305" key="9">
    <source>
    </source>
</evidence>
<evidence type="ECO:0000312" key="10">
    <source>
        <dbReference type="Araport" id="AT1G55805"/>
    </source>
</evidence>
<evidence type="ECO:0000312" key="11">
    <source>
        <dbReference type="EMBL" id="AC002304"/>
    </source>
</evidence>
<evidence type="ECO:0000312" key="12">
    <source>
        <dbReference type="EMBL" id="BAD43149.1"/>
    </source>
</evidence>
<evidence type="ECO:0007829" key="13">
    <source>
        <dbReference type="PDB" id="4PUG"/>
    </source>
</evidence>
<keyword id="KW-0001">2Fe-2S</keyword>
<keyword id="KW-0002">3D-structure</keyword>
<keyword id="KW-0150">Chloroplast</keyword>
<keyword id="KW-0408">Iron</keyword>
<keyword id="KW-0411">Iron-sulfur</keyword>
<keyword id="KW-0479">Metal-binding</keyword>
<keyword id="KW-0934">Plastid</keyword>
<keyword id="KW-1185">Reference proteome</keyword>
<keyword id="KW-0809">Transit peptide</keyword>
<comment type="function">
    <text evidence="5 9">May act either alone or in interaction with glutaredoxin as a redox-regulated transcriptional regulator, or as a factor regulating Fe-S cluster biogenesis (Probable). The glutaredoxin-BOLA1 heterodimers bind a labile, oxygen sensitive iron-sulfur cluster (PubMed:24714563).</text>
</comment>
<comment type="subunit">
    <text evidence="4 5">Interacts in vitro with GRXS14, GRXS15, GRXS16 and GRXS17, but not with GRXC5 (PubMed:24203231). Interacts in vivo only with GRXS14 and GRXS16 (PubMed:24203231, PubMed:24714563).</text>
</comment>
<comment type="subcellular location">
    <subcellularLocation>
        <location evidence="4">Plastid</location>
        <location evidence="4">Chloroplast</location>
    </subcellularLocation>
</comment>
<comment type="miscellaneous">
    <text evidence="6">The GRXS14-BOLA1 apo-heterodimer model derived from NMR data shows a domain arrangement totally different from the holo-heterodimer showing evidence for a Rieske-type ligation of a [2Fe-2S] cluster.</text>
</comment>
<comment type="similarity">
    <text evidence="2">Belongs to the bolA/yrbA family.</text>
</comment>
<comment type="sequence caution" evidence="8">
    <conflict type="erroneous initiation">
        <sequence resource="EMBL-CDS" id="AAK63866"/>
    </conflict>
    <text>Truncated N-terminus.</text>
</comment>
<comment type="sequence caution" evidence="8">
    <conflict type="erroneous initiation">
        <sequence resource="EMBL-CDS" id="BAD93986"/>
    </conflict>
    <text>Truncated N-terminus.</text>
</comment>
<feature type="transit peptide" description="Chloroplast" evidence="1">
    <location>
        <begin position="1"/>
        <end position="50"/>
    </location>
</feature>
<feature type="chain" id="PRO_0000432127" description="Protein BOLA1, chloroplastic" evidence="1">
    <location>
        <begin position="51"/>
        <end position="160"/>
    </location>
</feature>
<feature type="region of interest" description="Disordered" evidence="3">
    <location>
        <begin position="39"/>
        <end position="66"/>
    </location>
</feature>
<feature type="compositionally biased region" description="Polar residues" evidence="3">
    <location>
        <begin position="39"/>
        <end position="61"/>
    </location>
</feature>
<feature type="sequence conflict" description="In Ref. 4; AAK63866." evidence="8" ref="4">
    <original>S</original>
    <variation>T</variation>
    <location>
        <position position="11"/>
    </location>
</feature>
<feature type="helix" evidence="13">
    <location>
        <begin position="68"/>
        <end position="80"/>
    </location>
</feature>
<feature type="strand" evidence="13">
    <location>
        <begin position="83"/>
        <end position="89"/>
    </location>
</feature>
<feature type="helix" evidence="13">
    <location>
        <begin position="91"/>
        <end position="94"/>
    </location>
</feature>
<feature type="turn" evidence="13">
    <location>
        <begin position="98"/>
        <end position="103"/>
    </location>
</feature>
<feature type="strand" evidence="13">
    <location>
        <begin position="109"/>
        <end position="115"/>
    </location>
</feature>
<feature type="helix" evidence="13">
    <location>
        <begin position="117"/>
        <end position="119"/>
    </location>
</feature>
<feature type="helix" evidence="13">
    <location>
        <begin position="124"/>
        <end position="134"/>
    </location>
</feature>
<feature type="helix" evidence="13">
    <location>
        <begin position="136"/>
        <end position="140"/>
    </location>
</feature>
<feature type="strand" evidence="13">
    <location>
        <begin position="145"/>
        <end position="151"/>
    </location>
</feature>
<feature type="turn" evidence="13">
    <location>
        <begin position="153"/>
        <end position="155"/>
    </location>
</feature>
<proteinExistence type="evidence at protein level"/>
<accession>Q682I1</accession>
<accession>Q681B9</accession>
<accession>Q681R0</accession>
<accession>Q94EW7</accession>
<organism evidence="12">
    <name type="scientific">Arabidopsis thaliana</name>
    <name type="common">Mouse-ear cress</name>
    <dbReference type="NCBI Taxonomy" id="3702"/>
    <lineage>
        <taxon>Eukaryota</taxon>
        <taxon>Viridiplantae</taxon>
        <taxon>Streptophyta</taxon>
        <taxon>Embryophyta</taxon>
        <taxon>Tracheophyta</taxon>
        <taxon>Spermatophyta</taxon>
        <taxon>Magnoliopsida</taxon>
        <taxon>eudicotyledons</taxon>
        <taxon>Gunneridae</taxon>
        <taxon>Pentapetalae</taxon>
        <taxon>rosids</taxon>
        <taxon>malvids</taxon>
        <taxon>Brassicales</taxon>
        <taxon>Brassicaceae</taxon>
        <taxon>Camelineae</taxon>
        <taxon>Arabidopsis</taxon>
    </lineage>
</organism>
<name>BOLA1_ARATH</name>
<dbReference type="EMBL" id="AC002304">
    <property type="status" value="NOT_ANNOTATED_CDS"/>
    <property type="molecule type" value="Genomic_DNA"/>
</dbReference>
<dbReference type="EMBL" id="CP002684">
    <property type="protein sequence ID" value="AEE33299.1"/>
    <property type="molecule type" value="Genomic_DNA"/>
</dbReference>
<dbReference type="EMBL" id="AK175386">
    <property type="protein sequence ID" value="BAD43149.1"/>
    <property type="molecule type" value="mRNA"/>
</dbReference>
<dbReference type="EMBL" id="AK175698">
    <property type="protein sequence ID" value="BAD43461.1"/>
    <property type="molecule type" value="mRNA"/>
</dbReference>
<dbReference type="EMBL" id="AK175557">
    <property type="protein sequence ID" value="BAD43320.1"/>
    <property type="molecule type" value="mRNA"/>
</dbReference>
<dbReference type="EMBL" id="AK220773">
    <property type="protein sequence ID" value="BAD93986.1"/>
    <property type="status" value="ALT_INIT"/>
    <property type="molecule type" value="mRNA"/>
</dbReference>
<dbReference type="EMBL" id="AY143802">
    <property type="protein sequence ID" value="AAN28741.1"/>
    <property type="molecule type" value="mRNA"/>
</dbReference>
<dbReference type="EMBL" id="AF389294">
    <property type="protein sequence ID" value="AAK63866.1"/>
    <property type="status" value="ALT_INIT"/>
    <property type="molecule type" value="mRNA"/>
</dbReference>
<dbReference type="RefSeq" id="NP_564702.2">
    <property type="nucleotide sequence ID" value="NM_104457.5"/>
</dbReference>
<dbReference type="PDB" id="4PUG">
    <property type="method" value="X-ray"/>
    <property type="resolution" value="2.00 A"/>
    <property type="chains" value="A/B=64-160"/>
</dbReference>
<dbReference type="PDBsum" id="4PUG"/>
<dbReference type="SMR" id="Q682I1"/>
<dbReference type="FunCoup" id="Q682I1">
    <property type="interactions" value="760"/>
</dbReference>
<dbReference type="STRING" id="3702.Q682I1"/>
<dbReference type="iPTMnet" id="Q682I1"/>
<dbReference type="MetOSite" id="Q682I1"/>
<dbReference type="PaxDb" id="3702-AT1G55805.1"/>
<dbReference type="ProteomicsDB" id="222815"/>
<dbReference type="EnsemblPlants" id="AT1G55805.1">
    <property type="protein sequence ID" value="AT1G55805.1"/>
    <property type="gene ID" value="AT1G55805"/>
</dbReference>
<dbReference type="GeneID" id="842030"/>
<dbReference type="Gramene" id="AT1G55805.1">
    <property type="protein sequence ID" value="AT1G55805.1"/>
    <property type="gene ID" value="AT1G55805"/>
</dbReference>
<dbReference type="KEGG" id="ath:AT1G55805"/>
<dbReference type="Araport" id="AT1G55805"/>
<dbReference type="TAIR" id="AT1G55805">
    <property type="gene designation" value="BOLA1"/>
</dbReference>
<dbReference type="eggNOG" id="KOG2313">
    <property type="taxonomic scope" value="Eukaryota"/>
</dbReference>
<dbReference type="HOGENOM" id="CLU_109462_2_0_1"/>
<dbReference type="InParanoid" id="Q682I1"/>
<dbReference type="OMA" id="RTDEETH"/>
<dbReference type="OrthoDB" id="411584at2759"/>
<dbReference type="PhylomeDB" id="Q682I1"/>
<dbReference type="EvolutionaryTrace" id="Q682I1"/>
<dbReference type="PRO" id="PR:Q682I1"/>
<dbReference type="Proteomes" id="UP000006548">
    <property type="component" value="Chromosome 1"/>
</dbReference>
<dbReference type="ExpressionAtlas" id="Q682I1">
    <property type="expression patterns" value="baseline and differential"/>
</dbReference>
<dbReference type="GO" id="GO:0009507">
    <property type="term" value="C:chloroplast"/>
    <property type="evidence" value="ECO:0000314"/>
    <property type="project" value="TAIR"/>
</dbReference>
<dbReference type="GO" id="GO:0051537">
    <property type="term" value="F:2 iron, 2 sulfur cluster binding"/>
    <property type="evidence" value="ECO:0007669"/>
    <property type="project" value="UniProtKB-KW"/>
</dbReference>
<dbReference type="GO" id="GO:0046872">
    <property type="term" value="F:metal ion binding"/>
    <property type="evidence" value="ECO:0007669"/>
    <property type="project" value="UniProtKB-KW"/>
</dbReference>
<dbReference type="FunFam" id="3.30.300.90:FF:000004">
    <property type="entry name" value="SufE-like protein, chloroplastic"/>
    <property type="match status" value="1"/>
</dbReference>
<dbReference type="Gene3D" id="3.30.300.90">
    <property type="entry name" value="BolA-like"/>
    <property type="match status" value="1"/>
</dbReference>
<dbReference type="InterPro" id="IPR002634">
    <property type="entry name" value="BolA"/>
</dbReference>
<dbReference type="InterPro" id="IPR036065">
    <property type="entry name" value="BolA-like_sf"/>
</dbReference>
<dbReference type="PANTHER" id="PTHR46230">
    <property type="match status" value="1"/>
</dbReference>
<dbReference type="PANTHER" id="PTHR46230:SF6">
    <property type="entry name" value="PROTEIN BOLA1, CHLOROPLASTIC"/>
    <property type="match status" value="1"/>
</dbReference>
<dbReference type="Pfam" id="PF01722">
    <property type="entry name" value="BolA"/>
    <property type="match status" value="1"/>
</dbReference>
<dbReference type="SUPFAM" id="SSF82657">
    <property type="entry name" value="BolA-like"/>
    <property type="match status" value="1"/>
</dbReference>